<reference key="1">
    <citation type="journal article" date="2000" name="Nature">
        <title>The complete sequence of the mucosal pathogen Ureaplasma urealyticum.</title>
        <authorList>
            <person name="Glass J.I."/>
            <person name="Lefkowitz E.J."/>
            <person name="Glass J.S."/>
            <person name="Heiner C.R."/>
            <person name="Chen E.Y."/>
            <person name="Cassell G.H."/>
        </authorList>
    </citation>
    <scope>NUCLEOTIDE SEQUENCE [LARGE SCALE GENOMIC DNA]</scope>
    <source>
        <strain>ATCC 700970</strain>
    </source>
</reference>
<gene>
    <name evidence="1" type="primary">tilS</name>
    <name type="ordered locus">UU077</name>
</gene>
<evidence type="ECO:0000255" key="1">
    <source>
        <dbReference type="HAMAP-Rule" id="MF_01161"/>
    </source>
</evidence>
<organism>
    <name type="scientific">Ureaplasma parvum serovar 3 (strain ATCC 700970)</name>
    <dbReference type="NCBI Taxonomy" id="273119"/>
    <lineage>
        <taxon>Bacteria</taxon>
        <taxon>Bacillati</taxon>
        <taxon>Mycoplasmatota</taxon>
        <taxon>Mycoplasmoidales</taxon>
        <taxon>Mycoplasmoidaceae</taxon>
        <taxon>Ureaplasma</taxon>
    </lineage>
</organism>
<keyword id="KW-0067">ATP-binding</keyword>
<keyword id="KW-0963">Cytoplasm</keyword>
<keyword id="KW-0436">Ligase</keyword>
<keyword id="KW-0547">Nucleotide-binding</keyword>
<keyword id="KW-1185">Reference proteome</keyword>
<keyword id="KW-0819">tRNA processing</keyword>
<proteinExistence type="inferred from homology"/>
<accession>Q9PR68</accession>
<protein>
    <recommendedName>
        <fullName evidence="1">tRNA(Ile)-lysidine synthase</fullName>
        <ecNumber evidence="1">6.3.4.19</ecNumber>
    </recommendedName>
    <alternativeName>
        <fullName evidence="1">tRNA(Ile)-2-lysyl-cytidine synthase</fullName>
    </alternativeName>
    <alternativeName>
        <fullName evidence="1">tRNA(Ile)-lysidine synthetase</fullName>
    </alternativeName>
</protein>
<comment type="function">
    <text evidence="1">Ligates lysine onto the cytidine present at position 34 of the AUA codon-specific tRNA(Ile) that contains the anticodon CAU, in an ATP-dependent manner. Cytidine is converted to lysidine, thus changing the amino acid specificity of the tRNA from methionine to isoleucine.</text>
</comment>
<comment type="catalytic activity">
    <reaction evidence="1">
        <text>cytidine(34) in tRNA(Ile2) + L-lysine + ATP = lysidine(34) in tRNA(Ile2) + AMP + diphosphate + H(+)</text>
        <dbReference type="Rhea" id="RHEA:43744"/>
        <dbReference type="Rhea" id="RHEA-COMP:10625"/>
        <dbReference type="Rhea" id="RHEA-COMP:10670"/>
        <dbReference type="ChEBI" id="CHEBI:15378"/>
        <dbReference type="ChEBI" id="CHEBI:30616"/>
        <dbReference type="ChEBI" id="CHEBI:32551"/>
        <dbReference type="ChEBI" id="CHEBI:33019"/>
        <dbReference type="ChEBI" id="CHEBI:82748"/>
        <dbReference type="ChEBI" id="CHEBI:83665"/>
        <dbReference type="ChEBI" id="CHEBI:456215"/>
        <dbReference type="EC" id="6.3.4.19"/>
    </reaction>
</comment>
<comment type="subcellular location">
    <subcellularLocation>
        <location evidence="1">Cytoplasm</location>
    </subcellularLocation>
</comment>
<comment type="domain">
    <text>The N-terminal region contains the highly conserved SGGXDS motif, predicted to be a P-loop motif involved in ATP binding.</text>
</comment>
<comment type="similarity">
    <text evidence="1">Belongs to the tRNA(Ile)-lysidine synthase family.</text>
</comment>
<sequence>MKILIKLWTNLINRISNKKYLAAVSGGPDSMAMLNMYKRNIRVVCHVNYHKRESSDRDQQIVVDFCRKNNLIIEILDVDEKVYERYGHIDNFQTKARLIRYDFFKEIGKKYNIENLYIAHNFDDFLETAYMQRARQSKALFYGIKESNVINGIIVKRPVLFVRKQTLQRYCDENKIKYGIDETNELDIYERNRVRKIISSWSLNEVYDFKKFVIKYNKEHSSFANFIDLSYIEFKKNKYKYDYFIRQDDMVQYYLIYYFLIDHKIINPSENKIISLIKFFGKQINKEKAYRVQENIYMHVNDDELISLISYNKSDNISNSNVDIIDDHNVIEK</sequence>
<name>TILS_UREPA</name>
<feature type="chain" id="PRO_0000181799" description="tRNA(Ile)-lysidine synthase">
    <location>
        <begin position="1"/>
        <end position="333"/>
    </location>
</feature>
<feature type="binding site" evidence="1">
    <location>
        <begin position="25"/>
        <end position="30"/>
    </location>
    <ligand>
        <name>ATP</name>
        <dbReference type="ChEBI" id="CHEBI:30616"/>
    </ligand>
</feature>
<dbReference type="EC" id="6.3.4.19" evidence="1"/>
<dbReference type="EMBL" id="AF222894">
    <property type="protein sequence ID" value="AAF30482.1"/>
    <property type="molecule type" value="Genomic_DNA"/>
</dbReference>
<dbReference type="SMR" id="Q9PR68"/>
<dbReference type="STRING" id="273119.UU077"/>
<dbReference type="EnsemblBacteria" id="AAF30482">
    <property type="protein sequence ID" value="AAF30482"/>
    <property type="gene ID" value="UU077"/>
</dbReference>
<dbReference type="KEGG" id="uur:UU077"/>
<dbReference type="eggNOG" id="COG0037">
    <property type="taxonomic scope" value="Bacteria"/>
</dbReference>
<dbReference type="HOGENOM" id="CLU_018869_0_2_14"/>
<dbReference type="Proteomes" id="UP000000423">
    <property type="component" value="Chromosome"/>
</dbReference>
<dbReference type="GO" id="GO:0005737">
    <property type="term" value="C:cytoplasm"/>
    <property type="evidence" value="ECO:0007669"/>
    <property type="project" value="UniProtKB-SubCell"/>
</dbReference>
<dbReference type="GO" id="GO:0005524">
    <property type="term" value="F:ATP binding"/>
    <property type="evidence" value="ECO:0007669"/>
    <property type="project" value="UniProtKB-UniRule"/>
</dbReference>
<dbReference type="GO" id="GO:0032267">
    <property type="term" value="F:tRNA(Ile)-lysidine synthase activity"/>
    <property type="evidence" value="ECO:0007669"/>
    <property type="project" value="UniProtKB-EC"/>
</dbReference>
<dbReference type="GO" id="GO:0006400">
    <property type="term" value="P:tRNA modification"/>
    <property type="evidence" value="ECO:0007669"/>
    <property type="project" value="UniProtKB-UniRule"/>
</dbReference>
<dbReference type="CDD" id="cd01992">
    <property type="entry name" value="TilS_N"/>
    <property type="match status" value="1"/>
</dbReference>
<dbReference type="Gene3D" id="3.40.50.620">
    <property type="entry name" value="HUPs"/>
    <property type="match status" value="1"/>
</dbReference>
<dbReference type="HAMAP" id="MF_01161">
    <property type="entry name" value="tRNA_Ile_lys_synt"/>
    <property type="match status" value="1"/>
</dbReference>
<dbReference type="InterPro" id="IPR014729">
    <property type="entry name" value="Rossmann-like_a/b/a_fold"/>
</dbReference>
<dbReference type="InterPro" id="IPR011063">
    <property type="entry name" value="TilS/TtcA_N"/>
</dbReference>
<dbReference type="InterPro" id="IPR012094">
    <property type="entry name" value="tRNA_Ile_lys_synt"/>
</dbReference>
<dbReference type="InterPro" id="IPR012795">
    <property type="entry name" value="tRNA_Ile_lys_synt_N"/>
</dbReference>
<dbReference type="NCBIfam" id="TIGR02432">
    <property type="entry name" value="lysidine_TilS_N"/>
    <property type="match status" value="1"/>
</dbReference>
<dbReference type="PANTHER" id="PTHR43033">
    <property type="entry name" value="TRNA(ILE)-LYSIDINE SYNTHASE-RELATED"/>
    <property type="match status" value="1"/>
</dbReference>
<dbReference type="PANTHER" id="PTHR43033:SF1">
    <property type="entry name" value="TRNA(ILE)-LYSIDINE SYNTHASE-RELATED"/>
    <property type="match status" value="1"/>
</dbReference>
<dbReference type="Pfam" id="PF01171">
    <property type="entry name" value="ATP_bind_3"/>
    <property type="match status" value="1"/>
</dbReference>
<dbReference type="SUPFAM" id="SSF52402">
    <property type="entry name" value="Adenine nucleotide alpha hydrolases-like"/>
    <property type="match status" value="1"/>
</dbReference>